<keyword id="KW-0903">Direct protein sequencing</keyword>
<keyword id="KW-0472">Membrane</keyword>
<keyword id="KW-0576">Peroxisome</keyword>
<keyword id="KW-1185">Reference proteome</keyword>
<keyword id="KW-0812">Transmembrane</keyword>
<keyword id="KW-1133">Transmembrane helix</keyword>
<sequence>MAPAASRLRVESELRSLPKRALAQYLLFLKFYPVVTKAVSSGILSALGNLLAQMIEKKQKKDSRSLEVSGLLRYLVYGLFVTGPLSHYLYLFMEYWVPPEVPWARVKRLLLDRLFFAPTFLLLFFFVMNLLEGKNISVFVAKMRSGFWPALQMNWRMWTPLQFININYVPLQFRVLFANMAALFWYAYLASLGK</sequence>
<gene>
    <name type="primary">Pxmp2</name>
    <name type="synonym">Pmp22</name>
</gene>
<dbReference type="EMBL" id="X70223">
    <property type="protein sequence ID" value="CAA49756.1"/>
    <property type="molecule type" value="mRNA"/>
</dbReference>
<dbReference type="PIR" id="S28850">
    <property type="entry name" value="S28850"/>
</dbReference>
<dbReference type="RefSeq" id="NP_113775.1">
    <property type="nucleotide sequence ID" value="NM_031587.1"/>
</dbReference>
<dbReference type="BioGRID" id="248168">
    <property type="interactions" value="1"/>
</dbReference>
<dbReference type="FunCoup" id="Q07066">
    <property type="interactions" value="323"/>
</dbReference>
<dbReference type="STRING" id="10116.ENSRNOP00000053518"/>
<dbReference type="PhosphoSitePlus" id="Q07066"/>
<dbReference type="PaxDb" id="10116-ENSRNOP00000053518"/>
<dbReference type="GeneID" id="29533"/>
<dbReference type="KEGG" id="rno:29533"/>
<dbReference type="UCSC" id="RGD:61812">
    <property type="organism name" value="rat"/>
</dbReference>
<dbReference type="AGR" id="RGD:61812"/>
<dbReference type="CTD" id="5827"/>
<dbReference type="RGD" id="61812">
    <property type="gene designation" value="Pxmp2"/>
</dbReference>
<dbReference type="eggNOG" id="KOG1944">
    <property type="taxonomic scope" value="Eukaryota"/>
</dbReference>
<dbReference type="InParanoid" id="Q07066"/>
<dbReference type="OrthoDB" id="860at2759"/>
<dbReference type="PhylomeDB" id="Q07066"/>
<dbReference type="Reactome" id="R-RNO-9603798">
    <property type="pathway name" value="Class I peroxisomal membrane protein import"/>
</dbReference>
<dbReference type="PRO" id="PR:Q07066"/>
<dbReference type="Proteomes" id="UP000002494">
    <property type="component" value="Unplaced"/>
</dbReference>
<dbReference type="GO" id="GO:0005737">
    <property type="term" value="C:cytoplasm"/>
    <property type="evidence" value="ECO:0000266"/>
    <property type="project" value="RGD"/>
</dbReference>
<dbReference type="GO" id="GO:0005778">
    <property type="term" value="C:peroxisomal membrane"/>
    <property type="evidence" value="ECO:0000314"/>
    <property type="project" value="UniProtKB"/>
</dbReference>
<dbReference type="GO" id="GO:0005777">
    <property type="term" value="C:peroxisome"/>
    <property type="evidence" value="ECO:0000314"/>
    <property type="project" value="UniProtKB"/>
</dbReference>
<dbReference type="GO" id="GO:0032991">
    <property type="term" value="C:protein-containing complex"/>
    <property type="evidence" value="ECO:0000266"/>
    <property type="project" value="RGD"/>
</dbReference>
<dbReference type="InterPro" id="IPR007248">
    <property type="entry name" value="Mpv17_PMP22"/>
</dbReference>
<dbReference type="PANTHER" id="PTHR11266:SF80">
    <property type="entry name" value="PEROXISOMAL MEMBRANE PROTEIN 2"/>
    <property type="match status" value="1"/>
</dbReference>
<dbReference type="PANTHER" id="PTHR11266">
    <property type="entry name" value="PEROXISOMAL MEMBRANE PROTEIN 2, PXMP2 MPV17"/>
    <property type="match status" value="1"/>
</dbReference>
<dbReference type="Pfam" id="PF04117">
    <property type="entry name" value="Mpv17_PMP22"/>
    <property type="match status" value="1"/>
</dbReference>
<evidence type="ECO:0000250" key="1"/>
<evidence type="ECO:0000255" key="2"/>
<evidence type="ECO:0000269" key="3">
    <source>
    </source>
</evidence>
<evidence type="ECO:0000305" key="4"/>
<protein>
    <recommendedName>
        <fullName>Peroxisomal membrane protein 2</fullName>
    </recommendedName>
    <alternativeName>
        <fullName>22 kDa peroxisomal membrane protein</fullName>
    </alternativeName>
</protein>
<proteinExistence type="evidence at protein level"/>
<reference key="1">
    <citation type="journal article" date="1993" name="FEBS Lett.">
        <title>Membrane topology of the 22 kDa integral peroxisomal membrane protein.</title>
        <authorList>
            <person name="Kaldi K."/>
            <person name="Diestelkoetter P."/>
            <person name="Stenbeck G."/>
            <person name="Auerbach S."/>
            <person name="Jaekle U."/>
            <person name="Maegert H.-J."/>
            <person name="Wieland F.T."/>
            <person name="Just W.W."/>
        </authorList>
    </citation>
    <scope>NUCLEOTIDE SEQUENCE [MRNA]</scope>
    <scope>PROTEIN SEQUENCE OF 2-19; 31-37; 135-139 AND 145-154</scope>
    <source>
        <tissue>Liver</tissue>
    </source>
</reference>
<comment type="function">
    <text>Seems to be involved in pore-forming activity and may contribute to the unspecific permeability of the peroxisomal membrane.</text>
</comment>
<comment type="subunit">
    <text evidence="1">Interacts with PEX19 and SIVA1.</text>
</comment>
<comment type="subcellular location">
    <subcellularLocation>
        <location>Peroxisome membrane</location>
        <topology>Multi-pass membrane protein</topology>
    </subcellularLocation>
</comment>
<comment type="similarity">
    <text evidence="4">Belongs to the peroxisomal membrane protein PXMP2/4 family.</text>
</comment>
<feature type="initiator methionine" description="Removed" evidence="3">
    <location>
        <position position="1"/>
    </location>
</feature>
<feature type="chain" id="PRO_0000218931" description="Peroxisomal membrane protein 2">
    <location>
        <begin position="2"/>
        <end position="194"/>
    </location>
</feature>
<feature type="topological domain" description="Cytoplasmic" evidence="2">
    <location>
        <begin position="2"/>
        <end position="30"/>
    </location>
</feature>
<feature type="transmembrane region" description="Helical" evidence="2">
    <location>
        <begin position="31"/>
        <end position="51"/>
    </location>
</feature>
<feature type="topological domain" description="Peroxisomal" evidence="2">
    <location>
        <begin position="52"/>
        <end position="74"/>
    </location>
</feature>
<feature type="transmembrane region" description="Helical" evidence="2">
    <location>
        <begin position="75"/>
        <end position="95"/>
    </location>
</feature>
<feature type="topological domain" description="Cytoplasmic" evidence="2">
    <location>
        <begin position="96"/>
        <end position="113"/>
    </location>
</feature>
<feature type="transmembrane region" description="Helical" evidence="2">
    <location>
        <begin position="114"/>
        <end position="134"/>
    </location>
</feature>
<feature type="topological domain" description="Peroxisomal" evidence="2">
    <location>
        <begin position="135"/>
        <end position="172"/>
    </location>
</feature>
<feature type="transmembrane region" description="Helical" evidence="2">
    <location>
        <begin position="173"/>
        <end position="193"/>
    </location>
</feature>
<accession>Q07066</accession>
<name>PXMP2_RAT</name>
<organism>
    <name type="scientific">Rattus norvegicus</name>
    <name type="common">Rat</name>
    <dbReference type="NCBI Taxonomy" id="10116"/>
    <lineage>
        <taxon>Eukaryota</taxon>
        <taxon>Metazoa</taxon>
        <taxon>Chordata</taxon>
        <taxon>Craniata</taxon>
        <taxon>Vertebrata</taxon>
        <taxon>Euteleostomi</taxon>
        <taxon>Mammalia</taxon>
        <taxon>Eutheria</taxon>
        <taxon>Euarchontoglires</taxon>
        <taxon>Glires</taxon>
        <taxon>Rodentia</taxon>
        <taxon>Myomorpha</taxon>
        <taxon>Muroidea</taxon>
        <taxon>Muridae</taxon>
        <taxon>Murinae</taxon>
        <taxon>Rattus</taxon>
    </lineage>
</organism>